<gene>
    <name evidence="1" type="primary">tyrS</name>
    <name type="ordered locus">jhp_0711</name>
</gene>
<keyword id="KW-0030">Aminoacyl-tRNA synthetase</keyword>
<keyword id="KW-0067">ATP-binding</keyword>
<keyword id="KW-0963">Cytoplasm</keyword>
<keyword id="KW-0436">Ligase</keyword>
<keyword id="KW-0547">Nucleotide-binding</keyword>
<keyword id="KW-0648">Protein biosynthesis</keyword>
<keyword id="KW-0694">RNA-binding</keyword>
<organism>
    <name type="scientific">Helicobacter pylori (strain J99 / ATCC 700824)</name>
    <name type="common">Campylobacter pylori J99</name>
    <dbReference type="NCBI Taxonomy" id="85963"/>
    <lineage>
        <taxon>Bacteria</taxon>
        <taxon>Pseudomonadati</taxon>
        <taxon>Campylobacterota</taxon>
        <taxon>Epsilonproteobacteria</taxon>
        <taxon>Campylobacterales</taxon>
        <taxon>Helicobacteraceae</taxon>
        <taxon>Helicobacter</taxon>
    </lineage>
</organism>
<accession>Q9ZL69</accession>
<dbReference type="EC" id="6.1.1.1" evidence="1"/>
<dbReference type="EMBL" id="AE001439">
    <property type="protein sequence ID" value="AAD06286.1"/>
    <property type="molecule type" value="Genomic_DNA"/>
</dbReference>
<dbReference type="PIR" id="B71898">
    <property type="entry name" value="B71898"/>
</dbReference>
<dbReference type="RefSeq" id="WP_000435738.1">
    <property type="nucleotide sequence ID" value="NC_000921.1"/>
</dbReference>
<dbReference type="SMR" id="Q9ZL69"/>
<dbReference type="KEGG" id="hpj:jhp_0711"/>
<dbReference type="PATRIC" id="fig|85963.30.peg.266"/>
<dbReference type="eggNOG" id="COG0162">
    <property type="taxonomic scope" value="Bacteria"/>
</dbReference>
<dbReference type="Proteomes" id="UP000000804">
    <property type="component" value="Chromosome"/>
</dbReference>
<dbReference type="GO" id="GO:0005829">
    <property type="term" value="C:cytosol"/>
    <property type="evidence" value="ECO:0007669"/>
    <property type="project" value="TreeGrafter"/>
</dbReference>
<dbReference type="GO" id="GO:0005524">
    <property type="term" value="F:ATP binding"/>
    <property type="evidence" value="ECO:0007669"/>
    <property type="project" value="UniProtKB-UniRule"/>
</dbReference>
<dbReference type="GO" id="GO:0003723">
    <property type="term" value="F:RNA binding"/>
    <property type="evidence" value="ECO:0007669"/>
    <property type="project" value="UniProtKB-KW"/>
</dbReference>
<dbReference type="GO" id="GO:0004831">
    <property type="term" value="F:tyrosine-tRNA ligase activity"/>
    <property type="evidence" value="ECO:0007669"/>
    <property type="project" value="UniProtKB-UniRule"/>
</dbReference>
<dbReference type="GO" id="GO:0006437">
    <property type="term" value="P:tyrosyl-tRNA aminoacylation"/>
    <property type="evidence" value="ECO:0007669"/>
    <property type="project" value="UniProtKB-UniRule"/>
</dbReference>
<dbReference type="CDD" id="cd00165">
    <property type="entry name" value="S4"/>
    <property type="match status" value="1"/>
</dbReference>
<dbReference type="CDD" id="cd00805">
    <property type="entry name" value="TyrRS_core"/>
    <property type="match status" value="1"/>
</dbReference>
<dbReference type="FunFam" id="1.10.240.10:FF:000006">
    <property type="entry name" value="Tyrosine--tRNA ligase"/>
    <property type="match status" value="1"/>
</dbReference>
<dbReference type="FunFam" id="3.40.50.620:FF:000061">
    <property type="entry name" value="Tyrosine--tRNA ligase"/>
    <property type="match status" value="1"/>
</dbReference>
<dbReference type="Gene3D" id="3.40.50.620">
    <property type="entry name" value="HUPs"/>
    <property type="match status" value="1"/>
</dbReference>
<dbReference type="Gene3D" id="3.10.290.10">
    <property type="entry name" value="RNA-binding S4 domain"/>
    <property type="match status" value="1"/>
</dbReference>
<dbReference type="Gene3D" id="1.10.240.10">
    <property type="entry name" value="Tyrosyl-Transfer RNA Synthetase"/>
    <property type="match status" value="1"/>
</dbReference>
<dbReference type="HAMAP" id="MF_02007">
    <property type="entry name" value="Tyr_tRNA_synth_type2"/>
    <property type="match status" value="1"/>
</dbReference>
<dbReference type="InterPro" id="IPR001412">
    <property type="entry name" value="aa-tRNA-synth_I_CS"/>
</dbReference>
<dbReference type="InterPro" id="IPR002305">
    <property type="entry name" value="aa-tRNA-synth_Ic"/>
</dbReference>
<dbReference type="InterPro" id="IPR014729">
    <property type="entry name" value="Rossmann-like_a/b/a_fold"/>
</dbReference>
<dbReference type="InterPro" id="IPR002942">
    <property type="entry name" value="S4_RNA-bd"/>
</dbReference>
<dbReference type="InterPro" id="IPR036986">
    <property type="entry name" value="S4_RNA-bd_sf"/>
</dbReference>
<dbReference type="InterPro" id="IPR002307">
    <property type="entry name" value="Tyr-tRNA-ligase"/>
</dbReference>
<dbReference type="InterPro" id="IPR024088">
    <property type="entry name" value="Tyr-tRNA-ligase_bac-type"/>
</dbReference>
<dbReference type="InterPro" id="IPR024108">
    <property type="entry name" value="Tyr-tRNA-ligase_bac_2"/>
</dbReference>
<dbReference type="NCBIfam" id="TIGR00234">
    <property type="entry name" value="tyrS"/>
    <property type="match status" value="1"/>
</dbReference>
<dbReference type="PANTHER" id="PTHR11766:SF1">
    <property type="entry name" value="TYROSINE--TRNA LIGASE"/>
    <property type="match status" value="1"/>
</dbReference>
<dbReference type="PANTHER" id="PTHR11766">
    <property type="entry name" value="TYROSYL-TRNA SYNTHETASE"/>
    <property type="match status" value="1"/>
</dbReference>
<dbReference type="Pfam" id="PF01479">
    <property type="entry name" value="S4"/>
    <property type="match status" value="1"/>
</dbReference>
<dbReference type="Pfam" id="PF00579">
    <property type="entry name" value="tRNA-synt_1b"/>
    <property type="match status" value="1"/>
</dbReference>
<dbReference type="PRINTS" id="PR01040">
    <property type="entry name" value="TRNASYNTHTYR"/>
</dbReference>
<dbReference type="SMART" id="SM00363">
    <property type="entry name" value="S4"/>
    <property type="match status" value="1"/>
</dbReference>
<dbReference type="SUPFAM" id="SSF55174">
    <property type="entry name" value="Alpha-L RNA-binding motif"/>
    <property type="match status" value="1"/>
</dbReference>
<dbReference type="SUPFAM" id="SSF52374">
    <property type="entry name" value="Nucleotidylyl transferase"/>
    <property type="match status" value="1"/>
</dbReference>
<dbReference type="PROSITE" id="PS00178">
    <property type="entry name" value="AA_TRNA_LIGASE_I"/>
    <property type="match status" value="1"/>
</dbReference>
<dbReference type="PROSITE" id="PS50889">
    <property type="entry name" value="S4"/>
    <property type="match status" value="1"/>
</dbReference>
<protein>
    <recommendedName>
        <fullName evidence="1">Tyrosine--tRNA ligase</fullName>
        <ecNumber evidence="1">6.1.1.1</ecNumber>
    </recommendedName>
    <alternativeName>
        <fullName evidence="1">Tyrosyl-tRNA synthetase</fullName>
        <shortName evidence="1">TyrRS</shortName>
    </alternativeName>
</protein>
<evidence type="ECO:0000255" key="1">
    <source>
        <dbReference type="HAMAP-Rule" id="MF_02007"/>
    </source>
</evidence>
<name>SYY_HELPJ</name>
<feature type="chain" id="PRO_0000055656" description="Tyrosine--tRNA ligase">
    <location>
        <begin position="1"/>
        <end position="402"/>
    </location>
</feature>
<feature type="domain" description="S4 RNA-binding" evidence="1">
    <location>
        <begin position="341"/>
        <end position="401"/>
    </location>
</feature>
<feature type="short sequence motif" description="'HIGH' region">
    <location>
        <begin position="47"/>
        <end position="56"/>
    </location>
</feature>
<feature type="short sequence motif" description="'KMSKS' region">
    <location>
        <begin position="232"/>
        <end position="236"/>
    </location>
</feature>
<feature type="binding site" evidence="1">
    <location>
        <position position="235"/>
    </location>
    <ligand>
        <name>ATP</name>
        <dbReference type="ChEBI" id="CHEBI:30616"/>
    </ligand>
</feature>
<sequence length="402" mass="45688">MEQKISVALKEIKRGANEIIGLEYIEKLVRKYYETNERFIVKAGFDPTAPDLHLGHTVLIQKLALLQQYGARVKFLIGDFTAMIGDPTGKNETRKPLNREQVLENAKTYKEQIYKILDQKHTEVCFNSAWLDALGAKGMIELCAKFSVARMLERDDFAKRYKENRPISIVEFLYPLLQGYDSVAMGADIELGGNDQKFNLLVGRFLQRAYGLNKEQSIITMPLLEGLDGVQKMSKSLGNYVGITEEPNAMFGKIMSVSDDLMWRYYTLLSAKTLEEIEDLKHGILHQTLHPKAVKEDLASEIVARYYDNDQAFKAKEQFSKVFSANLLPEILLESDFDEGVGVLDVLKQIGFCPSTSQARRDIQGGGVKINQEVVKDESYRFVKGNYVIQLGKKRFMKLNIN</sequence>
<reference key="1">
    <citation type="journal article" date="1999" name="Nature">
        <title>Genomic sequence comparison of two unrelated isolates of the human gastric pathogen Helicobacter pylori.</title>
        <authorList>
            <person name="Alm R.A."/>
            <person name="Ling L.-S.L."/>
            <person name="Moir D.T."/>
            <person name="King B.L."/>
            <person name="Brown E.D."/>
            <person name="Doig P.C."/>
            <person name="Smith D.R."/>
            <person name="Noonan B."/>
            <person name="Guild B.C."/>
            <person name="deJonge B.L."/>
            <person name="Carmel G."/>
            <person name="Tummino P.J."/>
            <person name="Caruso A."/>
            <person name="Uria-Nickelsen M."/>
            <person name="Mills D.M."/>
            <person name="Ives C."/>
            <person name="Gibson R."/>
            <person name="Merberg D."/>
            <person name="Mills S.D."/>
            <person name="Jiang Q."/>
            <person name="Taylor D.E."/>
            <person name="Vovis G.F."/>
            <person name="Trust T.J."/>
        </authorList>
    </citation>
    <scope>NUCLEOTIDE SEQUENCE [LARGE SCALE GENOMIC DNA]</scope>
    <source>
        <strain>J99 / ATCC 700824</strain>
    </source>
</reference>
<proteinExistence type="inferred from homology"/>
<comment type="function">
    <text evidence="1">Catalyzes the attachment of tyrosine to tRNA(Tyr) in a two-step reaction: tyrosine is first activated by ATP to form Tyr-AMP and then transferred to the acceptor end of tRNA(Tyr).</text>
</comment>
<comment type="catalytic activity">
    <reaction evidence="1">
        <text>tRNA(Tyr) + L-tyrosine + ATP = L-tyrosyl-tRNA(Tyr) + AMP + diphosphate + H(+)</text>
        <dbReference type="Rhea" id="RHEA:10220"/>
        <dbReference type="Rhea" id="RHEA-COMP:9706"/>
        <dbReference type="Rhea" id="RHEA-COMP:9707"/>
        <dbReference type="ChEBI" id="CHEBI:15378"/>
        <dbReference type="ChEBI" id="CHEBI:30616"/>
        <dbReference type="ChEBI" id="CHEBI:33019"/>
        <dbReference type="ChEBI" id="CHEBI:58315"/>
        <dbReference type="ChEBI" id="CHEBI:78442"/>
        <dbReference type="ChEBI" id="CHEBI:78536"/>
        <dbReference type="ChEBI" id="CHEBI:456215"/>
        <dbReference type="EC" id="6.1.1.1"/>
    </reaction>
</comment>
<comment type="subunit">
    <text evidence="1">Homodimer.</text>
</comment>
<comment type="subcellular location">
    <subcellularLocation>
        <location evidence="1">Cytoplasm</location>
    </subcellularLocation>
</comment>
<comment type="similarity">
    <text evidence="1">Belongs to the class-I aminoacyl-tRNA synthetase family. TyrS type 2 subfamily.</text>
</comment>